<organism>
    <name type="scientific">Mycobacterium bovis (strain BCG / Tokyo 172 / ATCC 35737 / TMC 1019)</name>
    <dbReference type="NCBI Taxonomy" id="561275"/>
    <lineage>
        <taxon>Bacteria</taxon>
        <taxon>Bacillati</taxon>
        <taxon>Actinomycetota</taxon>
        <taxon>Actinomycetes</taxon>
        <taxon>Mycobacteriales</taxon>
        <taxon>Mycobacteriaceae</taxon>
        <taxon>Mycobacterium</taxon>
        <taxon>Mycobacterium tuberculosis complex</taxon>
    </lineage>
</organism>
<gene>
    <name evidence="1" type="primary">aroQ</name>
    <name type="ordered locus">JTY_2553</name>
</gene>
<evidence type="ECO:0000255" key="1">
    <source>
        <dbReference type="HAMAP-Rule" id="MF_00169"/>
    </source>
</evidence>
<proteinExistence type="inferred from homology"/>
<dbReference type="EC" id="4.2.1.10" evidence="1"/>
<dbReference type="EMBL" id="AP010918">
    <property type="protein sequence ID" value="BAH26834.1"/>
    <property type="molecule type" value="Genomic_DNA"/>
</dbReference>
<dbReference type="RefSeq" id="WP_003413001.1">
    <property type="nucleotide sequence ID" value="NZ_CP014566.1"/>
</dbReference>
<dbReference type="SMR" id="C1AF05"/>
<dbReference type="KEGG" id="mbt:JTY_2553"/>
<dbReference type="HOGENOM" id="CLU_090968_1_0_11"/>
<dbReference type="UniPathway" id="UPA00053">
    <property type="reaction ID" value="UER00086"/>
</dbReference>
<dbReference type="GO" id="GO:0003855">
    <property type="term" value="F:3-dehydroquinate dehydratase activity"/>
    <property type="evidence" value="ECO:0007669"/>
    <property type="project" value="UniProtKB-UniRule"/>
</dbReference>
<dbReference type="GO" id="GO:0008652">
    <property type="term" value="P:amino acid biosynthetic process"/>
    <property type="evidence" value="ECO:0007669"/>
    <property type="project" value="UniProtKB-KW"/>
</dbReference>
<dbReference type="GO" id="GO:0009073">
    <property type="term" value="P:aromatic amino acid family biosynthetic process"/>
    <property type="evidence" value="ECO:0007669"/>
    <property type="project" value="UniProtKB-KW"/>
</dbReference>
<dbReference type="GO" id="GO:0009423">
    <property type="term" value="P:chorismate biosynthetic process"/>
    <property type="evidence" value="ECO:0007669"/>
    <property type="project" value="UniProtKB-UniRule"/>
</dbReference>
<dbReference type="GO" id="GO:0019631">
    <property type="term" value="P:quinate catabolic process"/>
    <property type="evidence" value="ECO:0007669"/>
    <property type="project" value="TreeGrafter"/>
</dbReference>
<dbReference type="CDD" id="cd00466">
    <property type="entry name" value="DHQase_II"/>
    <property type="match status" value="1"/>
</dbReference>
<dbReference type="FunFam" id="3.40.50.9100:FF:000001">
    <property type="entry name" value="3-dehydroquinate dehydratase"/>
    <property type="match status" value="1"/>
</dbReference>
<dbReference type="Gene3D" id="3.40.50.9100">
    <property type="entry name" value="Dehydroquinase, class II"/>
    <property type="match status" value="1"/>
</dbReference>
<dbReference type="HAMAP" id="MF_00169">
    <property type="entry name" value="AroQ"/>
    <property type="match status" value="1"/>
</dbReference>
<dbReference type="InterPro" id="IPR001874">
    <property type="entry name" value="DHquinase_II"/>
</dbReference>
<dbReference type="InterPro" id="IPR018509">
    <property type="entry name" value="DHquinase_II_CS"/>
</dbReference>
<dbReference type="InterPro" id="IPR036441">
    <property type="entry name" value="DHquinase_II_sf"/>
</dbReference>
<dbReference type="NCBIfam" id="TIGR01088">
    <property type="entry name" value="aroQ"/>
    <property type="match status" value="1"/>
</dbReference>
<dbReference type="NCBIfam" id="NF003805">
    <property type="entry name" value="PRK05395.1-2"/>
    <property type="match status" value="1"/>
</dbReference>
<dbReference type="NCBIfam" id="NF003806">
    <property type="entry name" value="PRK05395.1-3"/>
    <property type="match status" value="1"/>
</dbReference>
<dbReference type="NCBIfam" id="NF003807">
    <property type="entry name" value="PRK05395.1-4"/>
    <property type="match status" value="1"/>
</dbReference>
<dbReference type="PANTHER" id="PTHR21272">
    <property type="entry name" value="CATABOLIC 3-DEHYDROQUINASE"/>
    <property type="match status" value="1"/>
</dbReference>
<dbReference type="PANTHER" id="PTHR21272:SF3">
    <property type="entry name" value="CATABOLIC 3-DEHYDROQUINASE"/>
    <property type="match status" value="1"/>
</dbReference>
<dbReference type="Pfam" id="PF01220">
    <property type="entry name" value="DHquinase_II"/>
    <property type="match status" value="1"/>
</dbReference>
<dbReference type="PIRSF" id="PIRSF001399">
    <property type="entry name" value="DHquinase_II"/>
    <property type="match status" value="1"/>
</dbReference>
<dbReference type="SUPFAM" id="SSF52304">
    <property type="entry name" value="Type II 3-dehydroquinate dehydratase"/>
    <property type="match status" value="1"/>
</dbReference>
<dbReference type="PROSITE" id="PS01029">
    <property type="entry name" value="DEHYDROQUINASE_II"/>
    <property type="match status" value="1"/>
</dbReference>
<keyword id="KW-0028">Amino-acid biosynthesis</keyword>
<keyword id="KW-0057">Aromatic amino acid biosynthesis</keyword>
<keyword id="KW-0456">Lyase</keyword>
<name>AROQ_MYCBT</name>
<feature type="chain" id="PRO_1000123694" description="3-dehydroquinate dehydratase">
    <location>
        <begin position="1"/>
        <end position="147"/>
    </location>
</feature>
<feature type="active site" description="Proton acceptor" evidence="1">
    <location>
        <position position="25"/>
    </location>
</feature>
<feature type="active site" description="Proton donor" evidence="1">
    <location>
        <position position="102"/>
    </location>
</feature>
<feature type="binding site" evidence="1">
    <location>
        <position position="76"/>
    </location>
    <ligand>
        <name>substrate</name>
    </ligand>
</feature>
<feature type="binding site" evidence="1">
    <location>
        <position position="82"/>
    </location>
    <ligand>
        <name>substrate</name>
    </ligand>
</feature>
<feature type="binding site" evidence="1">
    <location>
        <position position="89"/>
    </location>
    <ligand>
        <name>substrate</name>
    </ligand>
</feature>
<feature type="binding site" evidence="1">
    <location>
        <begin position="103"/>
        <end position="104"/>
    </location>
    <ligand>
        <name>substrate</name>
    </ligand>
</feature>
<feature type="binding site" evidence="1">
    <location>
        <position position="113"/>
    </location>
    <ligand>
        <name>substrate</name>
    </ligand>
</feature>
<feature type="site" description="Transition state stabilizer" evidence="1">
    <location>
        <position position="20"/>
    </location>
</feature>
<sequence>MSELIVNVINGPNLGRLGRREPAVYGGTTHDELVALIEREAAELGLKAVVRQSDSEAQLLDWIHQAADAAEPVILNAGGLTHTSVALRDACAELSAPLIEVHISNVHAREEFRRHSYLSPIATGVIVGLGIQGYLLALRYLAEHVGT</sequence>
<comment type="function">
    <text evidence="1">Catalyzes a trans-dehydration via an enolate intermediate.</text>
</comment>
<comment type="catalytic activity">
    <reaction evidence="1">
        <text>3-dehydroquinate = 3-dehydroshikimate + H2O</text>
        <dbReference type="Rhea" id="RHEA:21096"/>
        <dbReference type="ChEBI" id="CHEBI:15377"/>
        <dbReference type="ChEBI" id="CHEBI:16630"/>
        <dbReference type="ChEBI" id="CHEBI:32364"/>
        <dbReference type="EC" id="4.2.1.10"/>
    </reaction>
</comment>
<comment type="pathway">
    <text evidence="1">Metabolic intermediate biosynthesis; chorismate biosynthesis; chorismate from D-erythrose 4-phosphate and phosphoenolpyruvate: step 3/7.</text>
</comment>
<comment type="subunit">
    <text evidence="1">Homododecamer.</text>
</comment>
<comment type="similarity">
    <text evidence="1">Belongs to the type-II 3-dehydroquinase family.</text>
</comment>
<protein>
    <recommendedName>
        <fullName evidence="1">3-dehydroquinate dehydratase</fullName>
        <shortName evidence="1">3-dehydroquinase</shortName>
        <ecNumber evidence="1">4.2.1.10</ecNumber>
    </recommendedName>
    <alternativeName>
        <fullName evidence="1">Type II DHQase</fullName>
    </alternativeName>
</protein>
<accession>C1AF05</accession>
<reference key="1">
    <citation type="journal article" date="2009" name="Vaccine">
        <title>Whole genome sequence analysis of Mycobacterium bovis bacillus Calmette-Guerin (BCG) Tokyo 172: a comparative study of BCG vaccine substrains.</title>
        <authorList>
            <person name="Seki M."/>
            <person name="Honda I."/>
            <person name="Fujita I."/>
            <person name="Yano I."/>
            <person name="Yamamoto S."/>
            <person name="Koyama A."/>
        </authorList>
    </citation>
    <scope>NUCLEOTIDE SEQUENCE [LARGE SCALE GENOMIC DNA]</scope>
    <source>
        <strain>BCG / Tokyo 172 / ATCC 35737 / TMC 1019</strain>
    </source>
</reference>